<accession>B2UB12</accession>
<protein>
    <recommendedName>
        <fullName evidence="1">1-deoxy-D-xylulose 5-phosphate reductoisomerase</fullName>
        <shortName evidence="1">DXP reductoisomerase</shortName>
        <ecNumber evidence="1">1.1.1.267</ecNumber>
    </recommendedName>
    <alternativeName>
        <fullName evidence="1">1-deoxyxylulose-5-phosphate reductoisomerase</fullName>
    </alternativeName>
    <alternativeName>
        <fullName evidence="1">2-C-methyl-D-erythritol 4-phosphate synthase</fullName>
    </alternativeName>
</protein>
<sequence>MMRLTVLGATGSIGDSTLDVVRRHPDKYSVFALTANAQADKLAVLCREFRPKMAVLGSAAAADALRDQLGTEAAGIEICSGTKALEEAAAHPDCDAVMAAIVGAAGLRPTLAAVRAGKRVLLANKEALVMSGALFMDAVREHGATVLPIDSEHNAIFQCLPQQVPQFGRGVSRIVLTASGGPFRTRAVDSLADVTPDQACAHPNWVMGRKISVDSATMMNKGLEVIEAYWLFGVPVEHLEVLIHPQSVIHSMVGYDDGSVLAQLGNPDMRTPIAYGLAYPERIEAGVPLLDLVTTGALTFEAPDLRRFPCLALAFDALRAGGTAPAALNAANEVAVEAFLQRRIRFTEIAAVVGDTLARTSIVPADSLDTVFAADAQARQQAERYIATACAQLPAA</sequence>
<dbReference type="EC" id="1.1.1.267" evidence="1"/>
<dbReference type="EMBL" id="CP001068">
    <property type="protein sequence ID" value="ACD26428.1"/>
    <property type="molecule type" value="Genomic_DNA"/>
</dbReference>
<dbReference type="SMR" id="B2UB12"/>
<dbReference type="STRING" id="402626.Rpic_1284"/>
<dbReference type="KEGG" id="rpi:Rpic_1284"/>
<dbReference type="PATRIC" id="fig|402626.5.peg.2489"/>
<dbReference type="eggNOG" id="COG0743">
    <property type="taxonomic scope" value="Bacteria"/>
</dbReference>
<dbReference type="HOGENOM" id="CLU_035714_4_0_4"/>
<dbReference type="UniPathway" id="UPA00056">
    <property type="reaction ID" value="UER00092"/>
</dbReference>
<dbReference type="GO" id="GO:0030604">
    <property type="term" value="F:1-deoxy-D-xylulose-5-phosphate reductoisomerase activity"/>
    <property type="evidence" value="ECO:0007669"/>
    <property type="project" value="UniProtKB-UniRule"/>
</dbReference>
<dbReference type="GO" id="GO:0030145">
    <property type="term" value="F:manganese ion binding"/>
    <property type="evidence" value="ECO:0007669"/>
    <property type="project" value="TreeGrafter"/>
</dbReference>
<dbReference type="GO" id="GO:0070402">
    <property type="term" value="F:NADPH binding"/>
    <property type="evidence" value="ECO:0007669"/>
    <property type="project" value="InterPro"/>
</dbReference>
<dbReference type="GO" id="GO:0051484">
    <property type="term" value="P:isopentenyl diphosphate biosynthetic process, methylerythritol 4-phosphate pathway involved in terpenoid biosynthetic process"/>
    <property type="evidence" value="ECO:0007669"/>
    <property type="project" value="TreeGrafter"/>
</dbReference>
<dbReference type="FunFam" id="3.40.50.720:FF:000045">
    <property type="entry name" value="1-deoxy-D-xylulose 5-phosphate reductoisomerase"/>
    <property type="match status" value="1"/>
</dbReference>
<dbReference type="Gene3D" id="1.10.1740.10">
    <property type="match status" value="1"/>
</dbReference>
<dbReference type="Gene3D" id="3.40.50.720">
    <property type="entry name" value="NAD(P)-binding Rossmann-like Domain"/>
    <property type="match status" value="1"/>
</dbReference>
<dbReference type="HAMAP" id="MF_00183">
    <property type="entry name" value="DXP_reductoisom"/>
    <property type="match status" value="1"/>
</dbReference>
<dbReference type="InterPro" id="IPR003821">
    <property type="entry name" value="DXP_reductoisomerase"/>
</dbReference>
<dbReference type="InterPro" id="IPR013644">
    <property type="entry name" value="DXP_reductoisomerase_C"/>
</dbReference>
<dbReference type="InterPro" id="IPR013512">
    <property type="entry name" value="DXP_reductoisomerase_N"/>
</dbReference>
<dbReference type="InterPro" id="IPR026877">
    <property type="entry name" value="DXPR_C"/>
</dbReference>
<dbReference type="InterPro" id="IPR036169">
    <property type="entry name" value="DXPR_C_sf"/>
</dbReference>
<dbReference type="InterPro" id="IPR036291">
    <property type="entry name" value="NAD(P)-bd_dom_sf"/>
</dbReference>
<dbReference type="NCBIfam" id="TIGR00243">
    <property type="entry name" value="Dxr"/>
    <property type="match status" value="1"/>
</dbReference>
<dbReference type="NCBIfam" id="NF003938">
    <property type="entry name" value="PRK05447.1-1"/>
    <property type="match status" value="1"/>
</dbReference>
<dbReference type="NCBIfam" id="NF009114">
    <property type="entry name" value="PRK12464.1"/>
    <property type="match status" value="1"/>
</dbReference>
<dbReference type="PANTHER" id="PTHR30525">
    <property type="entry name" value="1-DEOXY-D-XYLULOSE 5-PHOSPHATE REDUCTOISOMERASE"/>
    <property type="match status" value="1"/>
</dbReference>
<dbReference type="PANTHER" id="PTHR30525:SF0">
    <property type="entry name" value="1-DEOXY-D-XYLULOSE 5-PHOSPHATE REDUCTOISOMERASE, CHLOROPLASTIC"/>
    <property type="match status" value="1"/>
</dbReference>
<dbReference type="Pfam" id="PF08436">
    <property type="entry name" value="DXP_redisom_C"/>
    <property type="match status" value="1"/>
</dbReference>
<dbReference type="Pfam" id="PF02670">
    <property type="entry name" value="DXP_reductoisom"/>
    <property type="match status" value="1"/>
</dbReference>
<dbReference type="Pfam" id="PF13288">
    <property type="entry name" value="DXPR_C"/>
    <property type="match status" value="1"/>
</dbReference>
<dbReference type="PIRSF" id="PIRSF006205">
    <property type="entry name" value="Dxp_reductismrs"/>
    <property type="match status" value="1"/>
</dbReference>
<dbReference type="SUPFAM" id="SSF69055">
    <property type="entry name" value="1-deoxy-D-xylulose-5-phosphate reductoisomerase, C-terminal domain"/>
    <property type="match status" value="1"/>
</dbReference>
<dbReference type="SUPFAM" id="SSF55347">
    <property type="entry name" value="Glyceraldehyde-3-phosphate dehydrogenase-like, C-terminal domain"/>
    <property type="match status" value="1"/>
</dbReference>
<dbReference type="SUPFAM" id="SSF51735">
    <property type="entry name" value="NAD(P)-binding Rossmann-fold domains"/>
    <property type="match status" value="1"/>
</dbReference>
<keyword id="KW-0414">Isoprene biosynthesis</keyword>
<keyword id="KW-0464">Manganese</keyword>
<keyword id="KW-0479">Metal-binding</keyword>
<keyword id="KW-0521">NADP</keyword>
<keyword id="KW-0560">Oxidoreductase</keyword>
<reference key="1">
    <citation type="submission" date="2008-05" db="EMBL/GenBank/DDBJ databases">
        <title>Complete sequence of chromosome 1 of Ralstonia pickettii 12J.</title>
        <authorList>
            <person name="Lucas S."/>
            <person name="Copeland A."/>
            <person name="Lapidus A."/>
            <person name="Glavina del Rio T."/>
            <person name="Dalin E."/>
            <person name="Tice H."/>
            <person name="Bruce D."/>
            <person name="Goodwin L."/>
            <person name="Pitluck S."/>
            <person name="Meincke L."/>
            <person name="Brettin T."/>
            <person name="Detter J.C."/>
            <person name="Han C."/>
            <person name="Kuske C.R."/>
            <person name="Schmutz J."/>
            <person name="Larimer F."/>
            <person name="Land M."/>
            <person name="Hauser L."/>
            <person name="Kyrpides N."/>
            <person name="Mikhailova N."/>
            <person name="Marsh T."/>
            <person name="Richardson P."/>
        </authorList>
    </citation>
    <scope>NUCLEOTIDE SEQUENCE [LARGE SCALE GENOMIC DNA]</scope>
    <source>
        <strain>12J</strain>
    </source>
</reference>
<proteinExistence type="inferred from homology"/>
<organism>
    <name type="scientific">Ralstonia pickettii (strain 12J)</name>
    <dbReference type="NCBI Taxonomy" id="402626"/>
    <lineage>
        <taxon>Bacteria</taxon>
        <taxon>Pseudomonadati</taxon>
        <taxon>Pseudomonadota</taxon>
        <taxon>Betaproteobacteria</taxon>
        <taxon>Burkholderiales</taxon>
        <taxon>Burkholderiaceae</taxon>
        <taxon>Ralstonia</taxon>
    </lineage>
</organism>
<gene>
    <name evidence="1" type="primary">dxr</name>
    <name type="ordered locus">Rpic_1284</name>
</gene>
<name>DXR_RALPJ</name>
<comment type="function">
    <text evidence="1">Catalyzes the NADPH-dependent rearrangement and reduction of 1-deoxy-D-xylulose-5-phosphate (DXP) to 2-C-methyl-D-erythritol 4-phosphate (MEP).</text>
</comment>
<comment type="catalytic activity">
    <reaction evidence="1">
        <text>2-C-methyl-D-erythritol 4-phosphate + NADP(+) = 1-deoxy-D-xylulose 5-phosphate + NADPH + H(+)</text>
        <dbReference type="Rhea" id="RHEA:13717"/>
        <dbReference type="ChEBI" id="CHEBI:15378"/>
        <dbReference type="ChEBI" id="CHEBI:57783"/>
        <dbReference type="ChEBI" id="CHEBI:57792"/>
        <dbReference type="ChEBI" id="CHEBI:58262"/>
        <dbReference type="ChEBI" id="CHEBI:58349"/>
        <dbReference type="EC" id="1.1.1.267"/>
    </reaction>
    <physiologicalReaction direction="right-to-left" evidence="1">
        <dbReference type="Rhea" id="RHEA:13719"/>
    </physiologicalReaction>
</comment>
<comment type="cofactor">
    <cofactor evidence="1">
        <name>Mg(2+)</name>
        <dbReference type="ChEBI" id="CHEBI:18420"/>
    </cofactor>
    <cofactor evidence="1">
        <name>Mn(2+)</name>
        <dbReference type="ChEBI" id="CHEBI:29035"/>
    </cofactor>
</comment>
<comment type="pathway">
    <text evidence="1">Isoprenoid biosynthesis; isopentenyl diphosphate biosynthesis via DXP pathway; isopentenyl diphosphate from 1-deoxy-D-xylulose 5-phosphate: step 1/6.</text>
</comment>
<comment type="similarity">
    <text evidence="1">Belongs to the DXR family.</text>
</comment>
<evidence type="ECO:0000255" key="1">
    <source>
        <dbReference type="HAMAP-Rule" id="MF_00183"/>
    </source>
</evidence>
<feature type="chain" id="PRO_1000098512" description="1-deoxy-D-xylulose 5-phosphate reductoisomerase">
    <location>
        <begin position="1"/>
        <end position="396"/>
    </location>
</feature>
<feature type="binding site" evidence="1">
    <location>
        <position position="10"/>
    </location>
    <ligand>
        <name>NADPH</name>
        <dbReference type="ChEBI" id="CHEBI:57783"/>
    </ligand>
</feature>
<feature type="binding site" evidence="1">
    <location>
        <position position="11"/>
    </location>
    <ligand>
        <name>NADPH</name>
        <dbReference type="ChEBI" id="CHEBI:57783"/>
    </ligand>
</feature>
<feature type="binding site" evidence="1">
    <location>
        <position position="12"/>
    </location>
    <ligand>
        <name>NADPH</name>
        <dbReference type="ChEBI" id="CHEBI:57783"/>
    </ligand>
</feature>
<feature type="binding site" evidence="1">
    <location>
        <position position="13"/>
    </location>
    <ligand>
        <name>NADPH</name>
        <dbReference type="ChEBI" id="CHEBI:57783"/>
    </ligand>
</feature>
<feature type="binding site" evidence="1">
    <location>
        <position position="38"/>
    </location>
    <ligand>
        <name>NADPH</name>
        <dbReference type="ChEBI" id="CHEBI:57783"/>
    </ligand>
</feature>
<feature type="binding site" evidence="1">
    <location>
        <position position="124"/>
    </location>
    <ligand>
        <name>NADPH</name>
        <dbReference type="ChEBI" id="CHEBI:57783"/>
    </ligand>
</feature>
<feature type="binding site" evidence="1">
    <location>
        <position position="125"/>
    </location>
    <ligand>
        <name>1-deoxy-D-xylulose 5-phosphate</name>
        <dbReference type="ChEBI" id="CHEBI:57792"/>
    </ligand>
</feature>
<feature type="binding site" evidence="1">
    <location>
        <position position="126"/>
    </location>
    <ligand>
        <name>NADPH</name>
        <dbReference type="ChEBI" id="CHEBI:57783"/>
    </ligand>
</feature>
<feature type="binding site" evidence="1">
    <location>
        <position position="150"/>
    </location>
    <ligand>
        <name>Mn(2+)</name>
        <dbReference type="ChEBI" id="CHEBI:29035"/>
    </ligand>
</feature>
<feature type="binding site" evidence="1">
    <location>
        <position position="151"/>
    </location>
    <ligand>
        <name>1-deoxy-D-xylulose 5-phosphate</name>
        <dbReference type="ChEBI" id="CHEBI:57792"/>
    </ligand>
</feature>
<feature type="binding site" evidence="1">
    <location>
        <position position="152"/>
    </location>
    <ligand>
        <name>1-deoxy-D-xylulose 5-phosphate</name>
        <dbReference type="ChEBI" id="CHEBI:57792"/>
    </ligand>
</feature>
<feature type="binding site" evidence="1">
    <location>
        <position position="152"/>
    </location>
    <ligand>
        <name>Mn(2+)</name>
        <dbReference type="ChEBI" id="CHEBI:29035"/>
    </ligand>
</feature>
<feature type="binding site" evidence="1">
    <location>
        <position position="179"/>
    </location>
    <ligand>
        <name>1-deoxy-D-xylulose 5-phosphate</name>
        <dbReference type="ChEBI" id="CHEBI:57792"/>
    </ligand>
</feature>
<feature type="binding site" evidence="1">
    <location>
        <position position="202"/>
    </location>
    <ligand>
        <name>1-deoxy-D-xylulose 5-phosphate</name>
        <dbReference type="ChEBI" id="CHEBI:57792"/>
    </ligand>
</feature>
<feature type="binding site" evidence="1">
    <location>
        <position position="208"/>
    </location>
    <ligand>
        <name>NADPH</name>
        <dbReference type="ChEBI" id="CHEBI:57783"/>
    </ligand>
</feature>
<feature type="binding site" evidence="1">
    <location>
        <position position="215"/>
    </location>
    <ligand>
        <name>1-deoxy-D-xylulose 5-phosphate</name>
        <dbReference type="ChEBI" id="CHEBI:57792"/>
    </ligand>
</feature>
<feature type="binding site" evidence="1">
    <location>
        <position position="220"/>
    </location>
    <ligand>
        <name>1-deoxy-D-xylulose 5-phosphate</name>
        <dbReference type="ChEBI" id="CHEBI:57792"/>
    </ligand>
</feature>
<feature type="binding site" evidence="1">
    <location>
        <position position="221"/>
    </location>
    <ligand>
        <name>1-deoxy-D-xylulose 5-phosphate</name>
        <dbReference type="ChEBI" id="CHEBI:57792"/>
    </ligand>
</feature>
<feature type="binding site" evidence="1">
    <location>
        <position position="224"/>
    </location>
    <ligand>
        <name>1-deoxy-D-xylulose 5-phosphate</name>
        <dbReference type="ChEBI" id="CHEBI:57792"/>
    </ligand>
</feature>
<feature type="binding site" evidence="1">
    <location>
        <position position="224"/>
    </location>
    <ligand>
        <name>Mn(2+)</name>
        <dbReference type="ChEBI" id="CHEBI:29035"/>
    </ligand>
</feature>